<protein>
    <recommendedName>
        <fullName evidence="4">DNA import protein CedA</fullName>
    </recommendedName>
    <alternativeName>
        <fullName evidence="3">Crenarchaeal system for exchange of DNA protein A</fullName>
    </alternativeName>
</protein>
<comment type="function">
    <text evidence="2">Part of the Ced system, which is involved in DNA import.</text>
</comment>
<comment type="subunit">
    <text evidence="2">Forms a complex composed of CedA, CedA1 and CedA2.</text>
</comment>
<comment type="subcellular location">
    <subcellularLocation>
        <location evidence="2">Cell membrane</location>
        <topology evidence="1">Multi-pass membrane protein</topology>
    </subcellularLocation>
</comment>
<comment type="induction">
    <text evidence="2">Up-regulated upon UV stress.</text>
</comment>
<comment type="disruption phenotype">
    <text evidence="2">DNA transfer is completely abolished in deletion mutants. Deletion does not reduce cellular aggregation induced by UV stress.</text>
</comment>
<organism>
    <name type="scientific">Sulfolobus acidocaldarius (strain ATCC 33909 / DSM 639 / JCM 8929 / NBRC 15157 / NCIMB 11770)</name>
    <dbReference type="NCBI Taxonomy" id="330779"/>
    <lineage>
        <taxon>Archaea</taxon>
        <taxon>Thermoproteota</taxon>
        <taxon>Thermoprotei</taxon>
        <taxon>Sulfolobales</taxon>
        <taxon>Sulfolobaceae</taxon>
        <taxon>Sulfolobus</taxon>
    </lineage>
</organism>
<proteinExistence type="evidence at protein level"/>
<accession>Q4JB69</accession>
<feature type="chain" id="PRO_0000437445" description="DNA import protein CedA">
    <location>
        <begin position="1"/>
        <end position="260"/>
    </location>
</feature>
<feature type="transmembrane region" description="Helical" evidence="1">
    <location>
        <begin position="13"/>
        <end position="33"/>
    </location>
</feature>
<feature type="transmembrane region" description="Helical" evidence="1">
    <location>
        <begin position="47"/>
        <end position="67"/>
    </location>
</feature>
<feature type="transmembrane region" description="Helical" evidence="1">
    <location>
        <begin position="110"/>
        <end position="130"/>
    </location>
</feature>
<feature type="transmembrane region" description="Helical" evidence="1">
    <location>
        <begin position="140"/>
        <end position="160"/>
    </location>
</feature>
<feature type="transmembrane region" description="Helical" evidence="1">
    <location>
        <begin position="169"/>
        <end position="189"/>
    </location>
</feature>
<feature type="transmembrane region" description="Helical" evidence="1">
    <location>
        <begin position="220"/>
        <end position="240"/>
    </location>
</feature>
<name>CEDA_SULAC</name>
<gene>
    <name evidence="3" type="primary">cedA</name>
    <name evidence="5" type="ordered locus">Saci_0568</name>
</gene>
<reference key="1">
    <citation type="journal article" date="2005" name="J. Bacteriol.">
        <title>The genome of Sulfolobus acidocaldarius, a model organism of the Crenarchaeota.</title>
        <authorList>
            <person name="Chen L."/>
            <person name="Bruegger K."/>
            <person name="Skovgaard M."/>
            <person name="Redder P."/>
            <person name="She Q."/>
            <person name="Torarinsson E."/>
            <person name="Greve B."/>
            <person name="Awayez M."/>
            <person name="Zibat A."/>
            <person name="Klenk H.-P."/>
            <person name="Garrett R.A."/>
        </authorList>
    </citation>
    <scope>NUCLEOTIDE SEQUENCE [LARGE SCALE GENOMIC DNA]</scope>
    <source>
        <strain>ATCC 33909 / DSM 639 / JCM 8929 / NBRC 15157 / NCIMB 11770</strain>
    </source>
</reference>
<reference key="2">
    <citation type="journal article" date="2016" name="Proc. Natl. Acad. Sci. U.S.A.">
        <title>The archaeal Ced system imports DNA.</title>
        <authorList>
            <person name="van Wolferen M."/>
            <person name="Wagner A."/>
            <person name="van der Does C."/>
            <person name="Albers S.V."/>
        </authorList>
    </citation>
    <scope>FUNCTION</scope>
    <scope>SUBUNIT</scope>
    <scope>SUBCELLULAR LOCATION</scope>
    <scope>INDUCTION</scope>
    <scope>DISRUPTION PHENOTYPE</scope>
    <source>
        <strain>JDS22</strain>
        <strain>MW001</strain>
    </source>
</reference>
<dbReference type="EMBL" id="CP000077">
    <property type="protein sequence ID" value="AAY79960.1"/>
    <property type="molecule type" value="Genomic_DNA"/>
</dbReference>
<dbReference type="RefSeq" id="WP_011277462.1">
    <property type="nucleotide sequence ID" value="NC_007181.1"/>
</dbReference>
<dbReference type="SMR" id="Q4JB69"/>
<dbReference type="STRING" id="330779.Saci_0568"/>
<dbReference type="TCDB" id="9.A.53.1.1">
    <property type="family name" value="the crenarchaeal system for exchange of dna (ced) family"/>
</dbReference>
<dbReference type="GeneID" id="14551089"/>
<dbReference type="GeneID" id="78440911"/>
<dbReference type="KEGG" id="sai:Saci_0568"/>
<dbReference type="PATRIC" id="fig|330779.12.peg.547"/>
<dbReference type="eggNOG" id="arCOG05930">
    <property type="taxonomic scope" value="Archaea"/>
</dbReference>
<dbReference type="HOGENOM" id="CLU_1040590_0_0_2"/>
<dbReference type="Proteomes" id="UP000001018">
    <property type="component" value="Chromosome"/>
</dbReference>
<dbReference type="GO" id="GO:0005886">
    <property type="term" value="C:plasma membrane"/>
    <property type="evidence" value="ECO:0007669"/>
    <property type="project" value="UniProtKB-SubCell"/>
</dbReference>
<dbReference type="InterPro" id="IPR049688">
    <property type="entry name" value="CedA_arc"/>
</dbReference>
<dbReference type="NCBIfam" id="NF041796">
    <property type="entry name" value="Ced_CedA"/>
    <property type="match status" value="1"/>
</dbReference>
<sequence>MLNPFQLLFYSQLLASLTYFIGAAIYALPVPVYGVKKWAPRLITDSIYVVVWNSIYLGVLLFLGELLSLLGVTWDGYFSWLNNILYIEQSLYLMVKTILTASNAVPEVSALIQVVPFGALLTVITSALTFTSTLIAVSKIVYQYVAVFIATGVLFLSIPFRIGRSVGGAFIGSGIVFYVGLPYLPQFLAAFQMLPTQELNTPPQNASAIIDYYVHVVPSIITSLVIGPVIYIFILVGFSMGVASLVSGYGSRLPLIIDVF</sequence>
<keyword id="KW-1003">Cell membrane</keyword>
<keyword id="KW-0472">Membrane</keyword>
<keyword id="KW-1185">Reference proteome</keyword>
<keyword id="KW-0812">Transmembrane</keyword>
<keyword id="KW-1133">Transmembrane helix</keyword>
<keyword id="KW-0813">Transport</keyword>
<evidence type="ECO:0000255" key="1"/>
<evidence type="ECO:0000269" key="2">
    <source>
    </source>
</evidence>
<evidence type="ECO:0000303" key="3">
    <source>
    </source>
</evidence>
<evidence type="ECO:0000305" key="4"/>
<evidence type="ECO:0000312" key="5">
    <source>
        <dbReference type="EMBL" id="AAY79960.1"/>
    </source>
</evidence>